<keyword id="KW-0030">Aminoacyl-tRNA synthetase</keyword>
<keyword id="KW-0067">ATP-binding</keyword>
<keyword id="KW-0963">Cytoplasm</keyword>
<keyword id="KW-0436">Ligase</keyword>
<keyword id="KW-0547">Nucleotide-binding</keyword>
<keyword id="KW-0648">Protein biosynthesis</keyword>
<keyword id="KW-1185">Reference proteome</keyword>
<feature type="chain" id="PRO_0000288320" description="Proline--tRNA ligase 1">
    <location>
        <begin position="1"/>
        <end position="571"/>
    </location>
</feature>
<comment type="function">
    <text evidence="1">Catalyzes the attachment of proline to tRNA(Pro) in a two-step reaction: proline is first activated by ATP to form Pro-AMP and then transferred to the acceptor end of tRNA(Pro). As ProRS can inadvertently accommodate and process non-cognate amino acids such as alanine and cysteine, to avoid such errors it has two additional distinct editing activities against alanine. One activity is designated as 'pretransfer' editing and involves the tRNA(Pro)-independent hydrolysis of activated Ala-AMP. The other activity is designated 'posttransfer' editing and involves deacylation of mischarged Ala-tRNA(Pro). The misacylated Cys-tRNA(Pro) is not edited by ProRS.</text>
</comment>
<comment type="catalytic activity">
    <reaction evidence="1">
        <text>tRNA(Pro) + L-proline + ATP = L-prolyl-tRNA(Pro) + AMP + diphosphate</text>
        <dbReference type="Rhea" id="RHEA:14305"/>
        <dbReference type="Rhea" id="RHEA-COMP:9700"/>
        <dbReference type="Rhea" id="RHEA-COMP:9702"/>
        <dbReference type="ChEBI" id="CHEBI:30616"/>
        <dbReference type="ChEBI" id="CHEBI:33019"/>
        <dbReference type="ChEBI" id="CHEBI:60039"/>
        <dbReference type="ChEBI" id="CHEBI:78442"/>
        <dbReference type="ChEBI" id="CHEBI:78532"/>
        <dbReference type="ChEBI" id="CHEBI:456215"/>
        <dbReference type="EC" id="6.1.1.15"/>
    </reaction>
</comment>
<comment type="subunit">
    <text evidence="1">Homodimer.</text>
</comment>
<comment type="subcellular location">
    <subcellularLocation>
        <location evidence="1">Cytoplasm</location>
    </subcellularLocation>
</comment>
<comment type="domain">
    <text evidence="1">Consists of three domains: the N-terminal catalytic domain, the editing domain and the C-terminal anticodon-binding domain.</text>
</comment>
<comment type="similarity">
    <text evidence="1">Belongs to the class-II aminoacyl-tRNA synthetase family. ProS type 1 subfamily.</text>
</comment>
<name>SYP1_CLOD6</name>
<sequence length="571" mass="64400">MKMSKMFMPTLKEIPADAEITSHQLMVRSGMIKKMTSGVYNQLPMGLRVFKKIEQIIREELNKKDCQEILCAALLPSELWKESGRWTAMGEEMFRLKDRTEREYCLGPTHEEAFTDIIRQEITSYKQLPLNLYQIQVKYRDERRPRFGVMRTKTFTMKDAYSFDVDDKGLDKSYQDMFDAYVSIFDRCGLENSPVQADSGAIGGSTSAEFMVKSEVGEDEVVFCSGCDYAANVERAESCNLASQKEEMKELEEVHTPGAATIKELEEFLKTSPDKFAKTLVYEADGKTVVVVVRGDREVNEIKVSNAIGSVIEFALATDDVVRKVTNAEVGFAGPIGINADYVFIDKEIVEQRNIVVGANKTEYHIKNANYGRDFEGIVGDFRNVQEGDKCIVCGKPLEIARGVEVGHIFKLGTKYSESMNANFIDKDGKSKPIVMGCYGIGVERTAAAIIEQHNDEKGIIWPLSVAPYHVVIVPANMKNEEQISIAENIYNDLQAMGVEVLLDDRDERIGVKFNDSELIGIPMRITVGKNINEGKVEFKLRHKEDKEIIDIEEINEKVKAEFIRNNVRLG</sequence>
<proteinExistence type="inferred from homology"/>
<protein>
    <recommendedName>
        <fullName evidence="1">Proline--tRNA ligase 1</fullName>
        <ecNumber evidence="1">6.1.1.15</ecNumber>
    </recommendedName>
    <alternativeName>
        <fullName evidence="1">Prolyl-tRNA synthetase 1</fullName>
        <shortName evidence="1">ProRS 1</shortName>
    </alternativeName>
</protein>
<gene>
    <name evidence="1" type="primary">proS1</name>
    <name type="ordered locus">CD630_00490</name>
</gene>
<dbReference type="EC" id="6.1.1.15" evidence="1"/>
<dbReference type="EMBL" id="AM180355">
    <property type="protein sequence ID" value="CAJ66863.1"/>
    <property type="molecule type" value="Genomic_DNA"/>
</dbReference>
<dbReference type="RefSeq" id="WP_009895180.1">
    <property type="nucleotide sequence ID" value="NZ_JAUPES010000031.1"/>
</dbReference>
<dbReference type="RefSeq" id="YP_001086512.1">
    <property type="nucleotide sequence ID" value="NC_009089.1"/>
</dbReference>
<dbReference type="SMR" id="Q18CD2"/>
<dbReference type="STRING" id="272563.CD630_00490"/>
<dbReference type="EnsemblBacteria" id="CAJ66863">
    <property type="protein sequence ID" value="CAJ66863"/>
    <property type="gene ID" value="CD630_00490"/>
</dbReference>
<dbReference type="KEGG" id="cdf:CD630_00490"/>
<dbReference type="KEGG" id="pdc:CDIF630_00112"/>
<dbReference type="PATRIC" id="fig|272563.120.peg.53"/>
<dbReference type="eggNOG" id="COG0442">
    <property type="taxonomic scope" value="Bacteria"/>
</dbReference>
<dbReference type="OrthoDB" id="9809052at2"/>
<dbReference type="PhylomeDB" id="Q18CD2"/>
<dbReference type="BioCyc" id="PDIF272563:G12WB-101-MONOMER"/>
<dbReference type="Proteomes" id="UP000001978">
    <property type="component" value="Chromosome"/>
</dbReference>
<dbReference type="GO" id="GO:0005829">
    <property type="term" value="C:cytosol"/>
    <property type="evidence" value="ECO:0007669"/>
    <property type="project" value="TreeGrafter"/>
</dbReference>
<dbReference type="GO" id="GO:0002161">
    <property type="term" value="F:aminoacyl-tRNA deacylase activity"/>
    <property type="evidence" value="ECO:0007669"/>
    <property type="project" value="InterPro"/>
</dbReference>
<dbReference type="GO" id="GO:0005524">
    <property type="term" value="F:ATP binding"/>
    <property type="evidence" value="ECO:0007669"/>
    <property type="project" value="UniProtKB-UniRule"/>
</dbReference>
<dbReference type="GO" id="GO:0140096">
    <property type="term" value="F:catalytic activity, acting on a protein"/>
    <property type="evidence" value="ECO:0007669"/>
    <property type="project" value="UniProtKB-ARBA"/>
</dbReference>
<dbReference type="GO" id="GO:0004827">
    <property type="term" value="F:proline-tRNA ligase activity"/>
    <property type="evidence" value="ECO:0007669"/>
    <property type="project" value="UniProtKB-UniRule"/>
</dbReference>
<dbReference type="GO" id="GO:0016740">
    <property type="term" value="F:transferase activity"/>
    <property type="evidence" value="ECO:0007669"/>
    <property type="project" value="UniProtKB-ARBA"/>
</dbReference>
<dbReference type="GO" id="GO:0006433">
    <property type="term" value="P:prolyl-tRNA aminoacylation"/>
    <property type="evidence" value="ECO:0007669"/>
    <property type="project" value="UniProtKB-UniRule"/>
</dbReference>
<dbReference type="CDD" id="cd04334">
    <property type="entry name" value="ProRS-INS"/>
    <property type="match status" value="1"/>
</dbReference>
<dbReference type="CDD" id="cd00861">
    <property type="entry name" value="ProRS_anticodon_short"/>
    <property type="match status" value="1"/>
</dbReference>
<dbReference type="CDD" id="cd00779">
    <property type="entry name" value="ProRS_core_prok"/>
    <property type="match status" value="1"/>
</dbReference>
<dbReference type="FunFam" id="3.30.930.10:FF:000065">
    <property type="entry name" value="Proline--tRNA ligase"/>
    <property type="match status" value="1"/>
</dbReference>
<dbReference type="FunFam" id="3.30.930.10:FF:000066">
    <property type="entry name" value="Proline--tRNA ligase"/>
    <property type="match status" value="1"/>
</dbReference>
<dbReference type="FunFam" id="3.40.50.800:FF:000011">
    <property type="entry name" value="Proline--tRNA ligase"/>
    <property type="match status" value="1"/>
</dbReference>
<dbReference type="Gene3D" id="3.40.50.800">
    <property type="entry name" value="Anticodon-binding domain"/>
    <property type="match status" value="1"/>
</dbReference>
<dbReference type="Gene3D" id="3.30.930.10">
    <property type="entry name" value="Bira Bifunctional Protein, Domain 2"/>
    <property type="match status" value="2"/>
</dbReference>
<dbReference type="HAMAP" id="MF_01569">
    <property type="entry name" value="Pro_tRNA_synth_type1"/>
    <property type="match status" value="1"/>
</dbReference>
<dbReference type="InterPro" id="IPR002314">
    <property type="entry name" value="aa-tRNA-synt_IIb"/>
</dbReference>
<dbReference type="InterPro" id="IPR006195">
    <property type="entry name" value="aa-tRNA-synth_II"/>
</dbReference>
<dbReference type="InterPro" id="IPR045864">
    <property type="entry name" value="aa-tRNA-synth_II/BPL/LPL"/>
</dbReference>
<dbReference type="InterPro" id="IPR004154">
    <property type="entry name" value="Anticodon-bd"/>
</dbReference>
<dbReference type="InterPro" id="IPR036621">
    <property type="entry name" value="Anticodon-bd_dom_sf"/>
</dbReference>
<dbReference type="InterPro" id="IPR002316">
    <property type="entry name" value="Pro-tRNA-ligase_IIa"/>
</dbReference>
<dbReference type="InterPro" id="IPR004500">
    <property type="entry name" value="Pro-tRNA-synth_IIa_bac-type"/>
</dbReference>
<dbReference type="InterPro" id="IPR023717">
    <property type="entry name" value="Pro-tRNA-Synthase_IIa_type1"/>
</dbReference>
<dbReference type="InterPro" id="IPR050062">
    <property type="entry name" value="Pro-tRNA_synthetase"/>
</dbReference>
<dbReference type="InterPro" id="IPR044140">
    <property type="entry name" value="ProRS_anticodon_short"/>
</dbReference>
<dbReference type="InterPro" id="IPR033730">
    <property type="entry name" value="ProRS_core_prok"/>
</dbReference>
<dbReference type="InterPro" id="IPR036754">
    <property type="entry name" value="YbaK/aa-tRNA-synt-asso_dom_sf"/>
</dbReference>
<dbReference type="InterPro" id="IPR007214">
    <property type="entry name" value="YbaK/aa-tRNA-synth-assoc-dom"/>
</dbReference>
<dbReference type="NCBIfam" id="NF006625">
    <property type="entry name" value="PRK09194.1"/>
    <property type="match status" value="1"/>
</dbReference>
<dbReference type="NCBIfam" id="TIGR00409">
    <property type="entry name" value="proS_fam_II"/>
    <property type="match status" value="1"/>
</dbReference>
<dbReference type="PANTHER" id="PTHR42753">
    <property type="entry name" value="MITOCHONDRIAL RIBOSOME PROTEIN L39/PROLYL-TRNA LIGASE FAMILY MEMBER"/>
    <property type="match status" value="1"/>
</dbReference>
<dbReference type="PANTHER" id="PTHR42753:SF2">
    <property type="entry name" value="PROLINE--TRNA LIGASE"/>
    <property type="match status" value="1"/>
</dbReference>
<dbReference type="Pfam" id="PF03129">
    <property type="entry name" value="HGTP_anticodon"/>
    <property type="match status" value="1"/>
</dbReference>
<dbReference type="Pfam" id="PF00587">
    <property type="entry name" value="tRNA-synt_2b"/>
    <property type="match status" value="1"/>
</dbReference>
<dbReference type="Pfam" id="PF04073">
    <property type="entry name" value="tRNA_edit"/>
    <property type="match status" value="1"/>
</dbReference>
<dbReference type="PRINTS" id="PR01046">
    <property type="entry name" value="TRNASYNTHPRO"/>
</dbReference>
<dbReference type="SUPFAM" id="SSF52954">
    <property type="entry name" value="Class II aaRS ABD-related"/>
    <property type="match status" value="1"/>
</dbReference>
<dbReference type="SUPFAM" id="SSF55681">
    <property type="entry name" value="Class II aaRS and biotin synthetases"/>
    <property type="match status" value="1"/>
</dbReference>
<dbReference type="SUPFAM" id="SSF55826">
    <property type="entry name" value="YbaK/ProRS associated domain"/>
    <property type="match status" value="1"/>
</dbReference>
<dbReference type="PROSITE" id="PS50862">
    <property type="entry name" value="AA_TRNA_LIGASE_II"/>
    <property type="match status" value="1"/>
</dbReference>
<reference key="1">
    <citation type="journal article" date="2006" name="Nat. Genet.">
        <title>The multidrug-resistant human pathogen Clostridium difficile has a highly mobile, mosaic genome.</title>
        <authorList>
            <person name="Sebaihia M."/>
            <person name="Wren B.W."/>
            <person name="Mullany P."/>
            <person name="Fairweather N.F."/>
            <person name="Minton N."/>
            <person name="Stabler R."/>
            <person name="Thomson N.R."/>
            <person name="Roberts A.P."/>
            <person name="Cerdeno-Tarraga A.M."/>
            <person name="Wang H."/>
            <person name="Holden M.T.G."/>
            <person name="Wright A."/>
            <person name="Churcher C."/>
            <person name="Quail M.A."/>
            <person name="Baker S."/>
            <person name="Bason N."/>
            <person name="Brooks K."/>
            <person name="Chillingworth T."/>
            <person name="Cronin A."/>
            <person name="Davis P."/>
            <person name="Dowd L."/>
            <person name="Fraser A."/>
            <person name="Feltwell T."/>
            <person name="Hance Z."/>
            <person name="Holroyd S."/>
            <person name="Jagels K."/>
            <person name="Moule S."/>
            <person name="Mungall K."/>
            <person name="Price C."/>
            <person name="Rabbinowitsch E."/>
            <person name="Sharp S."/>
            <person name="Simmonds M."/>
            <person name="Stevens K."/>
            <person name="Unwin L."/>
            <person name="Whithead S."/>
            <person name="Dupuy B."/>
            <person name="Dougan G."/>
            <person name="Barrell B."/>
            <person name="Parkhill J."/>
        </authorList>
    </citation>
    <scope>NUCLEOTIDE SEQUENCE [LARGE SCALE GENOMIC DNA]</scope>
    <source>
        <strain>630</strain>
    </source>
</reference>
<organism>
    <name type="scientific">Clostridioides difficile (strain 630)</name>
    <name type="common">Peptoclostridium difficile</name>
    <dbReference type="NCBI Taxonomy" id="272563"/>
    <lineage>
        <taxon>Bacteria</taxon>
        <taxon>Bacillati</taxon>
        <taxon>Bacillota</taxon>
        <taxon>Clostridia</taxon>
        <taxon>Peptostreptococcales</taxon>
        <taxon>Peptostreptococcaceae</taxon>
        <taxon>Clostridioides</taxon>
    </lineage>
</organism>
<accession>Q18CD2</accession>
<evidence type="ECO:0000255" key="1">
    <source>
        <dbReference type="HAMAP-Rule" id="MF_01569"/>
    </source>
</evidence>